<proteinExistence type="evidence at transcript level"/>
<comment type="function">
    <text evidence="1">May be involved in the conjugation of reduced glutathione to a wide number of exogenous and endogenous hydrophobic electrophiles and have a detoxification role against certain herbicides.</text>
</comment>
<comment type="catalytic activity">
    <reaction>
        <text>RX + glutathione = an S-substituted glutathione + a halide anion + H(+)</text>
        <dbReference type="Rhea" id="RHEA:16437"/>
        <dbReference type="ChEBI" id="CHEBI:15378"/>
        <dbReference type="ChEBI" id="CHEBI:16042"/>
        <dbReference type="ChEBI" id="CHEBI:17792"/>
        <dbReference type="ChEBI" id="CHEBI:57925"/>
        <dbReference type="ChEBI" id="CHEBI:90779"/>
        <dbReference type="EC" id="2.5.1.18"/>
    </reaction>
</comment>
<comment type="subcellular location">
    <subcellularLocation>
        <location evidence="5">Cytoplasm</location>
        <location evidence="5">Cytosol</location>
    </subcellularLocation>
</comment>
<comment type="alternative products">
    <event type="alternative splicing"/>
    <isoform>
        <id>Q84TK0-1</id>
        <name>1</name>
        <sequence type="displayed"/>
    </isoform>
    <isoform>
        <id>Q84TK0-2</id>
        <name>2</name>
        <sequence type="described" ref="VSP_041937"/>
    </isoform>
</comment>
<comment type="similarity">
    <text evidence="5">Belongs to the GST superfamily. Phi family.</text>
</comment>
<comment type="sequence caution" evidence="5">
    <conflict type="erroneous gene model prediction">
        <sequence resource="EMBL-CDS" id="AAF02871"/>
    </conflict>
</comment>
<sequence>MDCLQMVFKLFPNWKREAEVKKLVAGYKVHGDPFSTNTRRVLAVLHEKRLSYEPITVKLQTGEHKTEPFLSLNPFGQVPVFEDGSVKLYESRAITQYIAYVHSSRGTQLLNLRSHETMATLTMWMEIEAHQFDPPASKLTWEQVIKPIYGLETDQTIVKENEAILEKVLNIYEKRLEESRFLACNSFTLVDLHHLPNIQYLLGTPTKKLFEKRSKVRKWVDEITSREAWKMACDQEKSWFNKPRN</sequence>
<protein>
    <recommendedName>
        <fullName>Glutathione S-transferase F4</fullName>
        <shortName>AtGSTF4</shortName>
        <ecNumber>2.5.1.18</ecNumber>
    </recommendedName>
    <alternativeName>
        <fullName>GST class-phi member 4</fullName>
    </alternativeName>
    <alternativeName>
        <fullName>Glutathione S-transferase 31</fullName>
    </alternativeName>
</protein>
<accession>Q84TK0</accession>
<accession>Q9FPM2</accession>
<accession>Q9SRY7</accession>
<keyword id="KW-0025">Alternative splicing</keyword>
<keyword id="KW-0963">Cytoplasm</keyword>
<keyword id="KW-0216">Detoxification</keyword>
<keyword id="KW-1185">Reference proteome</keyword>
<keyword id="KW-0808">Transferase</keyword>
<evidence type="ECO:0000250" key="1"/>
<evidence type="ECO:0000303" key="2">
    <source>
    </source>
</evidence>
<evidence type="ECO:0000303" key="3">
    <source>
    </source>
</evidence>
<evidence type="ECO:0000303" key="4">
    <source ref="5"/>
</evidence>
<evidence type="ECO:0000305" key="5"/>
<gene>
    <name type="primary">GSTF4</name>
    <name type="synonym">GST31</name>
    <name type="ordered locus">At1g02950</name>
    <name type="ORF">F22D16.5</name>
</gene>
<name>GSTF4_ARATH</name>
<reference key="1">
    <citation type="journal article" date="2002" name="Plant Mol. Biol.">
        <title>Probing the diversity of the Arabidopsis glutathione S-transferase gene family.</title>
        <authorList>
            <person name="Wagner U."/>
            <person name="Edwards R."/>
            <person name="Dixon D.P."/>
            <person name="Mauch F."/>
        </authorList>
    </citation>
    <scope>NUCLEOTIDE SEQUENCE [MRNA] (ISOFORM 2)</scope>
    <scope>GENE FAMILY</scope>
    <scope>NOMENCLATURE</scope>
    <source>
        <strain>cv. Columbia</strain>
    </source>
</reference>
<reference key="2">
    <citation type="journal article" date="2000" name="Nature">
        <title>Sequence and analysis of chromosome 1 of the plant Arabidopsis thaliana.</title>
        <authorList>
            <person name="Theologis A."/>
            <person name="Ecker J.R."/>
            <person name="Palm C.J."/>
            <person name="Federspiel N.A."/>
            <person name="Kaul S."/>
            <person name="White O."/>
            <person name="Alonso J."/>
            <person name="Altafi H."/>
            <person name="Araujo R."/>
            <person name="Bowman C.L."/>
            <person name="Brooks S.Y."/>
            <person name="Buehler E."/>
            <person name="Chan A."/>
            <person name="Chao Q."/>
            <person name="Chen H."/>
            <person name="Cheuk R.F."/>
            <person name="Chin C.W."/>
            <person name="Chung M.K."/>
            <person name="Conn L."/>
            <person name="Conway A.B."/>
            <person name="Conway A.R."/>
            <person name="Creasy T.H."/>
            <person name="Dewar K."/>
            <person name="Dunn P."/>
            <person name="Etgu P."/>
            <person name="Feldblyum T.V."/>
            <person name="Feng J.-D."/>
            <person name="Fong B."/>
            <person name="Fujii C.Y."/>
            <person name="Gill J.E."/>
            <person name="Goldsmith A.D."/>
            <person name="Haas B."/>
            <person name="Hansen N.F."/>
            <person name="Hughes B."/>
            <person name="Huizar L."/>
            <person name="Hunter J.L."/>
            <person name="Jenkins J."/>
            <person name="Johnson-Hopson C."/>
            <person name="Khan S."/>
            <person name="Khaykin E."/>
            <person name="Kim C.J."/>
            <person name="Koo H.L."/>
            <person name="Kremenetskaia I."/>
            <person name="Kurtz D.B."/>
            <person name="Kwan A."/>
            <person name="Lam B."/>
            <person name="Langin-Hooper S."/>
            <person name="Lee A."/>
            <person name="Lee J.M."/>
            <person name="Lenz C.A."/>
            <person name="Li J.H."/>
            <person name="Li Y.-P."/>
            <person name="Lin X."/>
            <person name="Liu S.X."/>
            <person name="Liu Z.A."/>
            <person name="Luros J.S."/>
            <person name="Maiti R."/>
            <person name="Marziali A."/>
            <person name="Militscher J."/>
            <person name="Miranda M."/>
            <person name="Nguyen M."/>
            <person name="Nierman W.C."/>
            <person name="Osborne B.I."/>
            <person name="Pai G."/>
            <person name="Peterson J."/>
            <person name="Pham P.K."/>
            <person name="Rizzo M."/>
            <person name="Rooney T."/>
            <person name="Rowley D."/>
            <person name="Sakano H."/>
            <person name="Salzberg S.L."/>
            <person name="Schwartz J.R."/>
            <person name="Shinn P."/>
            <person name="Southwick A.M."/>
            <person name="Sun H."/>
            <person name="Tallon L.J."/>
            <person name="Tambunga G."/>
            <person name="Toriumi M.J."/>
            <person name="Town C.D."/>
            <person name="Utterback T."/>
            <person name="Van Aken S."/>
            <person name="Vaysberg M."/>
            <person name="Vysotskaia V.S."/>
            <person name="Walker M."/>
            <person name="Wu D."/>
            <person name="Yu G."/>
            <person name="Fraser C.M."/>
            <person name="Venter J.C."/>
            <person name="Davis R.W."/>
        </authorList>
    </citation>
    <scope>NUCLEOTIDE SEQUENCE [LARGE SCALE GENOMIC DNA]</scope>
    <source>
        <strain>cv. Columbia</strain>
    </source>
</reference>
<reference key="3">
    <citation type="journal article" date="2017" name="Plant J.">
        <title>Araport11: a complete reannotation of the Arabidopsis thaliana reference genome.</title>
        <authorList>
            <person name="Cheng C.Y."/>
            <person name="Krishnakumar V."/>
            <person name="Chan A.P."/>
            <person name="Thibaud-Nissen F."/>
            <person name="Schobel S."/>
            <person name="Town C.D."/>
        </authorList>
    </citation>
    <scope>GENOME REANNOTATION</scope>
    <source>
        <strain>cv. Columbia</strain>
    </source>
</reference>
<reference key="4">
    <citation type="journal article" date="2003" name="Science">
        <title>Empirical analysis of transcriptional activity in the Arabidopsis genome.</title>
        <authorList>
            <person name="Yamada K."/>
            <person name="Lim J."/>
            <person name="Dale J.M."/>
            <person name="Chen H."/>
            <person name="Shinn P."/>
            <person name="Palm C.J."/>
            <person name="Southwick A.M."/>
            <person name="Wu H.C."/>
            <person name="Kim C.J."/>
            <person name="Nguyen M."/>
            <person name="Pham P.K."/>
            <person name="Cheuk R.F."/>
            <person name="Karlin-Newmann G."/>
            <person name="Liu S.X."/>
            <person name="Lam B."/>
            <person name="Sakano H."/>
            <person name="Wu T."/>
            <person name="Yu G."/>
            <person name="Miranda M."/>
            <person name="Quach H.L."/>
            <person name="Tripp M."/>
            <person name="Chang C.H."/>
            <person name="Lee J.M."/>
            <person name="Toriumi M.J."/>
            <person name="Chan M.M."/>
            <person name="Tang C.C."/>
            <person name="Onodera C.S."/>
            <person name="Deng J.M."/>
            <person name="Akiyama K."/>
            <person name="Ansari Y."/>
            <person name="Arakawa T."/>
            <person name="Banh J."/>
            <person name="Banno F."/>
            <person name="Bowser L."/>
            <person name="Brooks S.Y."/>
            <person name="Carninci P."/>
            <person name="Chao Q."/>
            <person name="Choy N."/>
            <person name="Enju A."/>
            <person name="Goldsmith A.D."/>
            <person name="Gurjal M."/>
            <person name="Hansen N.F."/>
            <person name="Hayashizaki Y."/>
            <person name="Johnson-Hopson C."/>
            <person name="Hsuan V.W."/>
            <person name="Iida K."/>
            <person name="Karnes M."/>
            <person name="Khan S."/>
            <person name="Koesema E."/>
            <person name="Ishida J."/>
            <person name="Jiang P.X."/>
            <person name="Jones T."/>
            <person name="Kawai J."/>
            <person name="Kamiya A."/>
            <person name="Meyers C."/>
            <person name="Nakajima M."/>
            <person name="Narusaka M."/>
            <person name="Seki M."/>
            <person name="Sakurai T."/>
            <person name="Satou M."/>
            <person name="Tamse R."/>
            <person name="Vaysberg M."/>
            <person name="Wallender E.K."/>
            <person name="Wong C."/>
            <person name="Yamamura Y."/>
            <person name="Yuan S."/>
            <person name="Shinozaki K."/>
            <person name="Davis R.W."/>
            <person name="Theologis A."/>
            <person name="Ecker J.R."/>
        </authorList>
    </citation>
    <scope>NUCLEOTIDE SEQUENCE [LARGE SCALE MRNA] (ISOFORMS 1 AND 2)</scope>
    <source>
        <strain>cv. Columbia</strain>
    </source>
</reference>
<reference key="5">
    <citation type="submission" date="2004-12" db="EMBL/GenBank/DDBJ databases">
        <title>Arabidopsis ORF clones.</title>
        <authorList>
            <person name="Shinn P."/>
            <person name="Chen H."/>
            <person name="Cheuk R.F."/>
            <person name="Kim C.J."/>
            <person name="Ecker J.R."/>
        </authorList>
    </citation>
    <scope>NUCLEOTIDE SEQUENCE [LARGE SCALE MRNA] (ISOFORM 2)</scope>
    <source>
        <strain>cv. Columbia</strain>
    </source>
</reference>
<reference key="6">
    <citation type="submission" date="2006-07" db="EMBL/GenBank/DDBJ databases">
        <title>Large-scale analysis of RIKEN Arabidopsis full-length (RAFL) cDNAs.</title>
        <authorList>
            <person name="Totoki Y."/>
            <person name="Seki M."/>
            <person name="Ishida J."/>
            <person name="Nakajima M."/>
            <person name="Enju A."/>
            <person name="Kamiya A."/>
            <person name="Narusaka M."/>
            <person name="Shin-i T."/>
            <person name="Nakagawa M."/>
            <person name="Sakamoto N."/>
            <person name="Oishi K."/>
            <person name="Kohara Y."/>
            <person name="Kobayashi M."/>
            <person name="Toyoda A."/>
            <person name="Sakaki Y."/>
            <person name="Sakurai T."/>
            <person name="Iida K."/>
            <person name="Akiyama K."/>
            <person name="Satou M."/>
            <person name="Toyoda T."/>
            <person name="Konagaya A."/>
            <person name="Carninci P."/>
            <person name="Kawai J."/>
            <person name="Hayashizaki Y."/>
            <person name="Shinozaki K."/>
        </authorList>
    </citation>
    <scope>NUCLEOTIDE SEQUENCE [LARGE SCALE MRNA] (ISOFORM 1)</scope>
    <source>
        <strain>cv. Columbia</strain>
    </source>
</reference>
<dbReference type="EC" id="2.5.1.18"/>
<dbReference type="EMBL" id="AC009525">
    <property type="protein sequence ID" value="AAF02871.1"/>
    <property type="status" value="ALT_SEQ"/>
    <property type="molecule type" value="Genomic_DNA"/>
</dbReference>
<dbReference type="EMBL" id="CP002684">
    <property type="protein sequence ID" value="AEE27500.1"/>
    <property type="molecule type" value="Genomic_DNA"/>
</dbReference>
<dbReference type="EMBL" id="CP002684">
    <property type="protein sequence ID" value="AEE27501.1"/>
    <property type="molecule type" value="Genomic_DNA"/>
</dbReference>
<dbReference type="EMBL" id="CP002684">
    <property type="protein sequence ID" value="AEE27502.1"/>
    <property type="molecule type" value="Genomic_DNA"/>
</dbReference>
<dbReference type="EMBL" id="AF320055">
    <property type="protein sequence ID" value="AAG40875.1"/>
    <property type="molecule type" value="mRNA"/>
</dbReference>
<dbReference type="EMBL" id="BT005712">
    <property type="protein sequence ID" value="AAO64132.1"/>
    <property type="molecule type" value="mRNA"/>
</dbReference>
<dbReference type="EMBL" id="BT020399">
    <property type="protein sequence ID" value="AAV97790.1"/>
    <property type="molecule type" value="mRNA"/>
</dbReference>
<dbReference type="EMBL" id="AK228359">
    <property type="protein sequence ID" value="BAF00298.1"/>
    <property type="molecule type" value="mRNA"/>
</dbReference>
<dbReference type="PIR" id="A86160">
    <property type="entry name" value="A86160"/>
</dbReference>
<dbReference type="RefSeq" id="NP_001030937.1">
    <molecule id="Q84TK0-2"/>
    <property type="nucleotide sequence ID" value="NM_001035860.1"/>
</dbReference>
<dbReference type="RefSeq" id="NP_563670.1">
    <molecule id="Q84TK0-2"/>
    <property type="nucleotide sequence ID" value="NM_100176.4"/>
</dbReference>
<dbReference type="RefSeq" id="NP_849581.1">
    <molecule id="Q84TK0-1"/>
    <property type="nucleotide sequence ID" value="NM_179250.1"/>
</dbReference>
<dbReference type="SMR" id="Q84TK0"/>
<dbReference type="FunCoup" id="Q84TK0">
    <property type="interactions" value="1090"/>
</dbReference>
<dbReference type="STRING" id="3702.Q84TK0"/>
<dbReference type="iPTMnet" id="Q84TK0"/>
<dbReference type="PaxDb" id="3702-AT1G02950.2"/>
<dbReference type="ProteomicsDB" id="248494">
    <molecule id="Q84TK0-1"/>
</dbReference>
<dbReference type="EnsemblPlants" id="AT1G02950.1">
    <molecule id="Q84TK0-2"/>
    <property type="protein sequence ID" value="AT1G02950.1"/>
    <property type="gene ID" value="AT1G02950"/>
</dbReference>
<dbReference type="EnsemblPlants" id="AT1G02950.2">
    <molecule id="Q84TK0-1"/>
    <property type="protein sequence ID" value="AT1G02950.2"/>
    <property type="gene ID" value="AT1G02950"/>
</dbReference>
<dbReference type="EnsemblPlants" id="AT1G02950.3">
    <molecule id="Q84TK0-2"/>
    <property type="protein sequence ID" value="AT1G02950.3"/>
    <property type="gene ID" value="AT1G02950"/>
</dbReference>
<dbReference type="GeneID" id="838240"/>
<dbReference type="Gramene" id="AT1G02950.1">
    <molecule id="Q84TK0-2"/>
    <property type="protein sequence ID" value="AT1G02950.1"/>
    <property type="gene ID" value="AT1G02950"/>
</dbReference>
<dbReference type="Gramene" id="AT1G02950.2">
    <molecule id="Q84TK0-1"/>
    <property type="protein sequence ID" value="AT1G02950.2"/>
    <property type="gene ID" value="AT1G02950"/>
</dbReference>
<dbReference type="Gramene" id="AT1G02950.3">
    <molecule id="Q84TK0-2"/>
    <property type="protein sequence ID" value="AT1G02950.3"/>
    <property type="gene ID" value="AT1G02950"/>
</dbReference>
<dbReference type="KEGG" id="ath:AT1G02950"/>
<dbReference type="Araport" id="AT1G02950"/>
<dbReference type="TAIR" id="AT1G02950">
    <property type="gene designation" value="GSTF4"/>
</dbReference>
<dbReference type="eggNOG" id="KOG0867">
    <property type="taxonomic scope" value="Eukaryota"/>
</dbReference>
<dbReference type="InParanoid" id="Q84TK0"/>
<dbReference type="OrthoDB" id="422574at2759"/>
<dbReference type="PhylomeDB" id="Q84TK0"/>
<dbReference type="PRO" id="PR:Q84TK0"/>
<dbReference type="Proteomes" id="UP000006548">
    <property type="component" value="Chromosome 1"/>
</dbReference>
<dbReference type="ExpressionAtlas" id="Q84TK0">
    <property type="expression patterns" value="baseline and differential"/>
</dbReference>
<dbReference type="GO" id="GO:0005737">
    <property type="term" value="C:cytoplasm"/>
    <property type="evidence" value="ECO:0000303"/>
    <property type="project" value="TAIR"/>
</dbReference>
<dbReference type="GO" id="GO:0005829">
    <property type="term" value="C:cytosol"/>
    <property type="evidence" value="ECO:0007669"/>
    <property type="project" value="UniProtKB-SubCell"/>
</dbReference>
<dbReference type="GO" id="GO:0004364">
    <property type="term" value="F:glutathione transferase activity"/>
    <property type="evidence" value="ECO:0007669"/>
    <property type="project" value="UniProtKB-EC"/>
</dbReference>
<dbReference type="GO" id="GO:0009407">
    <property type="term" value="P:toxin catabolic process"/>
    <property type="evidence" value="ECO:0000304"/>
    <property type="project" value="TAIR"/>
</dbReference>
<dbReference type="CDD" id="cd03187">
    <property type="entry name" value="GST_C_Phi"/>
    <property type="match status" value="1"/>
</dbReference>
<dbReference type="CDD" id="cd03053">
    <property type="entry name" value="GST_N_Phi"/>
    <property type="match status" value="1"/>
</dbReference>
<dbReference type="FunFam" id="1.20.1050.10:FF:000004">
    <property type="entry name" value="Glutathione S-transferase F2"/>
    <property type="match status" value="1"/>
</dbReference>
<dbReference type="FunFam" id="3.40.30.10:FF:000016">
    <property type="entry name" value="Glutathione S-transferase F2"/>
    <property type="match status" value="1"/>
</dbReference>
<dbReference type="Gene3D" id="1.20.1050.10">
    <property type="match status" value="1"/>
</dbReference>
<dbReference type="Gene3D" id="3.40.30.10">
    <property type="entry name" value="Glutaredoxin"/>
    <property type="match status" value="1"/>
</dbReference>
<dbReference type="InterPro" id="IPR010987">
    <property type="entry name" value="Glutathione-S-Trfase_C-like"/>
</dbReference>
<dbReference type="InterPro" id="IPR036282">
    <property type="entry name" value="Glutathione-S-Trfase_C_sf"/>
</dbReference>
<dbReference type="InterPro" id="IPR040079">
    <property type="entry name" value="Glutathione_S-Trfase"/>
</dbReference>
<dbReference type="InterPro" id="IPR004045">
    <property type="entry name" value="Glutathione_S-Trfase_N"/>
</dbReference>
<dbReference type="InterPro" id="IPR004046">
    <property type="entry name" value="GST_C"/>
</dbReference>
<dbReference type="InterPro" id="IPR034347">
    <property type="entry name" value="GST_Phi_C"/>
</dbReference>
<dbReference type="InterPro" id="IPR036249">
    <property type="entry name" value="Thioredoxin-like_sf"/>
</dbReference>
<dbReference type="PANTHER" id="PTHR43900:SF62">
    <property type="entry name" value="GLUTATHIONE S-TRANSFERASE F4"/>
    <property type="match status" value="1"/>
</dbReference>
<dbReference type="PANTHER" id="PTHR43900">
    <property type="entry name" value="GLUTATHIONE S-TRANSFERASE RHO"/>
    <property type="match status" value="1"/>
</dbReference>
<dbReference type="Pfam" id="PF00043">
    <property type="entry name" value="GST_C"/>
    <property type="match status" value="1"/>
</dbReference>
<dbReference type="Pfam" id="PF02798">
    <property type="entry name" value="GST_N"/>
    <property type="match status" value="1"/>
</dbReference>
<dbReference type="SFLD" id="SFLDS00019">
    <property type="entry name" value="Glutathione_Transferase_(cytos"/>
    <property type="match status" value="1"/>
</dbReference>
<dbReference type="SFLD" id="SFLDG01154">
    <property type="entry name" value="Main.5:_Phi-like"/>
    <property type="match status" value="1"/>
</dbReference>
<dbReference type="SUPFAM" id="SSF47616">
    <property type="entry name" value="GST C-terminal domain-like"/>
    <property type="match status" value="1"/>
</dbReference>
<dbReference type="SUPFAM" id="SSF52833">
    <property type="entry name" value="Thioredoxin-like"/>
    <property type="match status" value="1"/>
</dbReference>
<dbReference type="PROSITE" id="PS50405">
    <property type="entry name" value="GST_CTER"/>
    <property type="match status" value="1"/>
</dbReference>
<dbReference type="PROSITE" id="PS50404">
    <property type="entry name" value="GST_NTER"/>
    <property type="match status" value="1"/>
</dbReference>
<feature type="chain" id="PRO_0000413542" description="Glutathione S-transferase F4">
    <location>
        <begin position="1"/>
        <end position="245"/>
    </location>
</feature>
<feature type="domain" description="GST N-terminal">
    <location>
        <begin position="25"/>
        <end position="106"/>
    </location>
</feature>
<feature type="domain" description="GST C-terminal">
    <location>
        <begin position="114"/>
        <end position="244"/>
    </location>
</feature>
<feature type="binding site" evidence="1">
    <location>
        <begin position="35"/>
        <end position="36"/>
    </location>
    <ligand>
        <name>glutathione</name>
        <dbReference type="ChEBI" id="CHEBI:57925"/>
    </ligand>
</feature>
<feature type="binding site" evidence="1">
    <location>
        <begin position="64"/>
        <end position="65"/>
    </location>
    <ligand>
        <name>glutathione</name>
        <dbReference type="ChEBI" id="CHEBI:57925"/>
    </ligand>
</feature>
<feature type="binding site" evidence="1">
    <location>
        <begin position="77"/>
        <end position="78"/>
    </location>
    <ligand>
        <name>glutathione</name>
        <dbReference type="ChEBI" id="CHEBI:57925"/>
    </ligand>
</feature>
<feature type="binding site" evidence="1">
    <location>
        <begin position="90"/>
        <end position="91"/>
    </location>
    <ligand>
        <name>glutathione</name>
        <dbReference type="ChEBI" id="CHEBI:57925"/>
    </ligand>
</feature>
<feature type="splice variant" id="VSP_041937" description="In isoform 2." evidence="2 3 4">
    <location>
        <begin position="24"/>
        <end position="25"/>
    </location>
</feature>
<organism>
    <name type="scientific">Arabidopsis thaliana</name>
    <name type="common">Mouse-ear cress</name>
    <dbReference type="NCBI Taxonomy" id="3702"/>
    <lineage>
        <taxon>Eukaryota</taxon>
        <taxon>Viridiplantae</taxon>
        <taxon>Streptophyta</taxon>
        <taxon>Embryophyta</taxon>
        <taxon>Tracheophyta</taxon>
        <taxon>Spermatophyta</taxon>
        <taxon>Magnoliopsida</taxon>
        <taxon>eudicotyledons</taxon>
        <taxon>Gunneridae</taxon>
        <taxon>Pentapetalae</taxon>
        <taxon>rosids</taxon>
        <taxon>malvids</taxon>
        <taxon>Brassicales</taxon>
        <taxon>Brassicaceae</taxon>
        <taxon>Camelineae</taxon>
        <taxon>Arabidopsis</taxon>
    </lineage>
</organism>